<keyword id="KW-0929">Antimicrobial</keyword>
<keyword id="KW-1015">Disulfide bond</keyword>
<keyword id="KW-0295">Fungicide</keyword>
<keyword id="KW-0611">Plant defense</keyword>
<keyword id="KW-1185">Reference proteome</keyword>
<keyword id="KW-0964">Secreted</keyword>
<keyword id="KW-0732">Signal</keyword>
<reference evidence="3" key="1">
    <citation type="journal article" date="1999" name="Nature">
        <title>Sequence and analysis of chromosome 2 of the plant Arabidopsis thaliana.</title>
        <authorList>
            <person name="Lin X."/>
            <person name="Kaul S."/>
            <person name="Rounsley S.D."/>
            <person name="Shea T.P."/>
            <person name="Benito M.-I."/>
            <person name="Town C.D."/>
            <person name="Fujii C.Y."/>
            <person name="Mason T.M."/>
            <person name="Bowman C.L."/>
            <person name="Barnstead M.E."/>
            <person name="Feldblyum T.V."/>
            <person name="Buell C.R."/>
            <person name="Ketchum K.A."/>
            <person name="Lee J.J."/>
            <person name="Ronning C.M."/>
            <person name="Koo H.L."/>
            <person name="Moffat K.S."/>
            <person name="Cronin L.A."/>
            <person name="Shen M."/>
            <person name="Pai G."/>
            <person name="Van Aken S."/>
            <person name="Umayam L."/>
            <person name="Tallon L.J."/>
            <person name="Gill J.E."/>
            <person name="Adams M.D."/>
            <person name="Carrera A.J."/>
            <person name="Creasy T.H."/>
            <person name="Goodman H.M."/>
            <person name="Somerville C.R."/>
            <person name="Copenhaver G.P."/>
            <person name="Preuss D."/>
            <person name="Nierman W.C."/>
            <person name="White O."/>
            <person name="Eisen J.A."/>
            <person name="Salzberg S.L."/>
            <person name="Fraser C.M."/>
            <person name="Venter J.C."/>
        </authorList>
    </citation>
    <scope>NUCLEOTIDE SEQUENCE [LARGE SCALE GENOMIC DNA]</scope>
    <source>
        <strain>cv. Columbia</strain>
    </source>
</reference>
<reference key="2">
    <citation type="journal article" date="2017" name="Plant J.">
        <title>Araport11: a complete reannotation of the Arabidopsis thaliana reference genome.</title>
        <authorList>
            <person name="Cheng C.Y."/>
            <person name="Krishnakumar V."/>
            <person name="Chan A.P."/>
            <person name="Thibaud-Nissen F."/>
            <person name="Schobel S."/>
            <person name="Town C.D."/>
        </authorList>
    </citation>
    <scope>GENOME REANNOTATION</scope>
    <source>
        <strain>cv. Columbia</strain>
    </source>
</reference>
<reference evidence="3" key="3">
    <citation type="journal article" date="2001" name="Plant Mol. Biol.">
        <title>Two large Arabidopsis thaliana gene families are homologous to the Brassica gene superfamily that encodes pollen coat proteins and the male component of the self-incompatibility response.</title>
        <authorList>
            <person name="Vanoosthuyse V."/>
            <person name="Miege C."/>
            <person name="Dumas C."/>
            <person name="Cock J.M."/>
        </authorList>
    </citation>
    <scope>IDENTIFICATION</scope>
</reference>
<reference key="4">
    <citation type="journal article" date="2005" name="Plant Physiol.">
        <title>Genome organization of more than 300 defensin-like genes in Arabidopsis.</title>
        <authorList>
            <person name="Silverstein K.A.T."/>
            <person name="Graham M.A."/>
            <person name="Paape T.D."/>
            <person name="VandenBosch K.A."/>
        </authorList>
    </citation>
    <scope>GENE FAMILY</scope>
</reference>
<gene>
    <name type="primary">SCRL15</name>
    <name type="ordered locus">At2g05335</name>
    <name type="ORF">F5G3</name>
</gene>
<accession>P82634</accession>
<name>DF253_ARATH</name>
<proteinExistence type="inferred from homology"/>
<feature type="signal peptide" evidence="2">
    <location>
        <begin position="1"/>
        <end position="23"/>
    </location>
</feature>
<feature type="chain" id="PRO_0000031941" description="Putative defensin-like protein 253">
    <location>
        <begin position="24"/>
        <end position="101"/>
    </location>
</feature>
<feature type="disulfide bond" evidence="1">
    <location>
        <begin position="31"/>
        <end position="84"/>
    </location>
</feature>
<feature type="disulfide bond" evidence="1">
    <location>
        <begin position="41"/>
        <end position="66"/>
    </location>
</feature>
<feature type="disulfide bond" evidence="1">
    <location>
        <begin position="49"/>
        <end position="76"/>
    </location>
</feature>
<feature type="disulfide bond" evidence="1">
    <location>
        <begin position="64"/>
        <end position="78"/>
    </location>
</feature>
<dbReference type="EMBL" id="AC007018">
    <property type="status" value="NOT_ANNOTATED_CDS"/>
    <property type="molecule type" value="Genomic_DNA"/>
</dbReference>
<dbReference type="EMBL" id="CP002685">
    <property type="protein sequence ID" value="AEC05918.1"/>
    <property type="molecule type" value="Genomic_DNA"/>
</dbReference>
<dbReference type="RefSeq" id="NP_001031326.1">
    <property type="nucleotide sequence ID" value="NM_001036249.2"/>
</dbReference>
<dbReference type="STRING" id="3702.P82634"/>
<dbReference type="PaxDb" id="3702-AT2G05335.1"/>
<dbReference type="EnsemblPlants" id="AT2G05335.1">
    <property type="protein sequence ID" value="AT2G05335.1"/>
    <property type="gene ID" value="AT2G05335"/>
</dbReference>
<dbReference type="GeneID" id="3768061"/>
<dbReference type="Gramene" id="AT2G05335.1">
    <property type="protein sequence ID" value="AT2G05335.1"/>
    <property type="gene ID" value="AT2G05335"/>
</dbReference>
<dbReference type="KEGG" id="ath:AT2G05335"/>
<dbReference type="Araport" id="AT2G05335"/>
<dbReference type="TAIR" id="AT2G05335">
    <property type="gene designation" value="SCRL15"/>
</dbReference>
<dbReference type="HOGENOM" id="CLU_174283_1_0_1"/>
<dbReference type="InParanoid" id="P82634"/>
<dbReference type="OMA" id="FPCKEPP"/>
<dbReference type="PhylomeDB" id="P82634"/>
<dbReference type="PRO" id="PR:P82634"/>
<dbReference type="Proteomes" id="UP000006548">
    <property type="component" value="Chromosome 2"/>
</dbReference>
<dbReference type="ExpressionAtlas" id="P82634">
    <property type="expression patterns" value="baseline"/>
</dbReference>
<dbReference type="GO" id="GO:0005576">
    <property type="term" value="C:extracellular region"/>
    <property type="evidence" value="ECO:0007669"/>
    <property type="project" value="UniProtKB-SubCell"/>
</dbReference>
<dbReference type="GO" id="GO:0050832">
    <property type="term" value="P:defense response to fungus"/>
    <property type="evidence" value="ECO:0007669"/>
    <property type="project" value="UniProtKB-KW"/>
</dbReference>
<dbReference type="GO" id="GO:0031640">
    <property type="term" value="P:killing of cells of another organism"/>
    <property type="evidence" value="ECO:0007669"/>
    <property type="project" value="UniProtKB-KW"/>
</dbReference>
<dbReference type="GO" id="GO:0007165">
    <property type="term" value="P:signal transduction"/>
    <property type="evidence" value="ECO:0007669"/>
    <property type="project" value="InterPro"/>
</dbReference>
<dbReference type="InterPro" id="IPR010682">
    <property type="entry name" value="SCRL"/>
</dbReference>
<dbReference type="PANTHER" id="PTHR34450:SF6">
    <property type="entry name" value="DEFENSIN-LIKE PROTEIN 241-RELATED"/>
    <property type="match status" value="1"/>
</dbReference>
<dbReference type="PANTHER" id="PTHR34450">
    <property type="entry name" value="DEFENSIN-LIKE PROTEIN 245-RELATED"/>
    <property type="match status" value="1"/>
</dbReference>
<dbReference type="Pfam" id="PF06876">
    <property type="entry name" value="SCRL"/>
    <property type="match status" value="1"/>
</dbReference>
<comment type="subcellular location">
    <subcellularLocation>
        <location evidence="1">Secreted</location>
    </subcellularLocation>
</comment>
<comment type="similarity">
    <text evidence="3">Belongs to the DEFL family.</text>
</comment>
<sequence>MRFASLFVVYCTFMFLDISHVKCEVEPVPYCKVITWYDVKCGADGNKTCVDHLIKGHIYDVPVCDCSELTTSGILCTCQHRFPCKEPPPLHRISIRKQIRG</sequence>
<protein>
    <recommendedName>
        <fullName>Putative defensin-like protein 253</fullName>
    </recommendedName>
    <alternativeName>
        <fullName>Putative S locus cysteine-rich-like protein 15</fullName>
        <shortName>Protein SCRL15</shortName>
        <shortName>SCR-like protein 15</shortName>
    </alternativeName>
</protein>
<evidence type="ECO:0000250" key="1"/>
<evidence type="ECO:0000255" key="2"/>
<evidence type="ECO:0000305" key="3"/>
<organism evidence="3">
    <name type="scientific">Arabidopsis thaliana</name>
    <name type="common">Mouse-ear cress</name>
    <dbReference type="NCBI Taxonomy" id="3702"/>
    <lineage>
        <taxon>Eukaryota</taxon>
        <taxon>Viridiplantae</taxon>
        <taxon>Streptophyta</taxon>
        <taxon>Embryophyta</taxon>
        <taxon>Tracheophyta</taxon>
        <taxon>Spermatophyta</taxon>
        <taxon>Magnoliopsida</taxon>
        <taxon>eudicotyledons</taxon>
        <taxon>Gunneridae</taxon>
        <taxon>Pentapetalae</taxon>
        <taxon>rosids</taxon>
        <taxon>malvids</taxon>
        <taxon>Brassicales</taxon>
        <taxon>Brassicaceae</taxon>
        <taxon>Camelineae</taxon>
        <taxon>Arabidopsis</taxon>
    </lineage>
</organism>